<dbReference type="EC" id="1.15.1.1"/>
<dbReference type="EMBL" id="AY461705">
    <property type="protein sequence ID" value="AAR97568.1"/>
    <property type="molecule type" value="mRNA"/>
</dbReference>
<dbReference type="RefSeq" id="NP_001037084.1">
    <property type="nucleotide sequence ID" value="NM_001043619.1"/>
</dbReference>
<dbReference type="PDB" id="3L9E">
    <property type="method" value="X-ray"/>
    <property type="resolution" value="2.05 A"/>
    <property type="chains" value="A/B/C/D=1-154"/>
</dbReference>
<dbReference type="PDB" id="3L9Y">
    <property type="method" value="X-ray"/>
    <property type="resolution" value="1.80 A"/>
    <property type="chains" value="A/B=1-154"/>
</dbReference>
<dbReference type="PDBsum" id="3L9E"/>
<dbReference type="PDBsum" id="3L9Y"/>
<dbReference type="SMR" id="P82205"/>
<dbReference type="FunCoup" id="P82205">
    <property type="interactions" value="1064"/>
</dbReference>
<dbReference type="STRING" id="7091.P82205"/>
<dbReference type="PaxDb" id="7091-BGIBMGA001307-TA"/>
<dbReference type="EnsemblMetazoa" id="NM_001043619.1">
    <property type="protein sequence ID" value="NP_001037084.1"/>
    <property type="gene ID" value="GeneID_692639"/>
</dbReference>
<dbReference type="GeneID" id="692639"/>
<dbReference type="KEGG" id="bmor:692639"/>
<dbReference type="CTD" id="6647"/>
<dbReference type="eggNOG" id="KOG0441">
    <property type="taxonomic scope" value="Eukaryota"/>
</dbReference>
<dbReference type="HOGENOM" id="CLU_056632_4_1_1"/>
<dbReference type="InParanoid" id="P82205"/>
<dbReference type="OMA" id="AQRGFHI"/>
<dbReference type="OrthoDB" id="182638at7088"/>
<dbReference type="EvolutionaryTrace" id="P82205"/>
<dbReference type="Proteomes" id="UP000005204">
    <property type="component" value="Unassembled WGS sequence"/>
</dbReference>
<dbReference type="GO" id="GO:0005737">
    <property type="term" value="C:cytoplasm"/>
    <property type="evidence" value="ECO:0007669"/>
    <property type="project" value="UniProtKB-SubCell"/>
</dbReference>
<dbReference type="GO" id="GO:0005507">
    <property type="term" value="F:copper ion binding"/>
    <property type="evidence" value="ECO:0000353"/>
    <property type="project" value="UniProtKB"/>
</dbReference>
<dbReference type="GO" id="GO:0042802">
    <property type="term" value="F:identical protein binding"/>
    <property type="evidence" value="ECO:0000353"/>
    <property type="project" value="UniProtKB"/>
</dbReference>
<dbReference type="GO" id="GO:0004784">
    <property type="term" value="F:superoxide dismutase activity"/>
    <property type="evidence" value="ECO:0007669"/>
    <property type="project" value="UniProtKB-EC"/>
</dbReference>
<dbReference type="GO" id="GO:0008270">
    <property type="term" value="F:zinc ion binding"/>
    <property type="evidence" value="ECO:0000353"/>
    <property type="project" value="UniProtKB"/>
</dbReference>
<dbReference type="CDD" id="cd00305">
    <property type="entry name" value="Cu-Zn_Superoxide_Dismutase"/>
    <property type="match status" value="1"/>
</dbReference>
<dbReference type="FunFam" id="2.60.40.200:FF:000001">
    <property type="entry name" value="Superoxide dismutase [Cu-Zn]"/>
    <property type="match status" value="1"/>
</dbReference>
<dbReference type="Gene3D" id="2.60.40.200">
    <property type="entry name" value="Superoxide dismutase, copper/zinc binding domain"/>
    <property type="match status" value="1"/>
</dbReference>
<dbReference type="InterPro" id="IPR036423">
    <property type="entry name" value="SOD-like_Cu/Zn_dom_sf"/>
</dbReference>
<dbReference type="InterPro" id="IPR024134">
    <property type="entry name" value="SOD_Cu/Zn_/chaperone"/>
</dbReference>
<dbReference type="InterPro" id="IPR018152">
    <property type="entry name" value="SOD_Cu/Zn_BS"/>
</dbReference>
<dbReference type="InterPro" id="IPR001424">
    <property type="entry name" value="SOD_Cu_Zn_dom"/>
</dbReference>
<dbReference type="PANTHER" id="PTHR10003">
    <property type="entry name" value="SUPEROXIDE DISMUTASE CU-ZN -RELATED"/>
    <property type="match status" value="1"/>
</dbReference>
<dbReference type="Pfam" id="PF00080">
    <property type="entry name" value="Sod_Cu"/>
    <property type="match status" value="1"/>
</dbReference>
<dbReference type="PRINTS" id="PR00068">
    <property type="entry name" value="CUZNDISMTASE"/>
</dbReference>
<dbReference type="SUPFAM" id="SSF49329">
    <property type="entry name" value="Cu,Zn superoxide dismutase-like"/>
    <property type="match status" value="1"/>
</dbReference>
<dbReference type="PROSITE" id="PS00087">
    <property type="entry name" value="SOD_CU_ZN_1"/>
    <property type="match status" value="1"/>
</dbReference>
<dbReference type="PROSITE" id="PS00332">
    <property type="entry name" value="SOD_CU_ZN_2"/>
    <property type="match status" value="1"/>
</dbReference>
<organism>
    <name type="scientific">Bombyx mori</name>
    <name type="common">Silk moth</name>
    <dbReference type="NCBI Taxonomy" id="7091"/>
    <lineage>
        <taxon>Eukaryota</taxon>
        <taxon>Metazoa</taxon>
        <taxon>Ecdysozoa</taxon>
        <taxon>Arthropoda</taxon>
        <taxon>Hexapoda</taxon>
        <taxon>Insecta</taxon>
        <taxon>Pterygota</taxon>
        <taxon>Neoptera</taxon>
        <taxon>Endopterygota</taxon>
        <taxon>Lepidoptera</taxon>
        <taxon>Glossata</taxon>
        <taxon>Ditrysia</taxon>
        <taxon>Bombycoidea</taxon>
        <taxon>Bombycidae</taxon>
        <taxon>Bombycinae</taxon>
        <taxon>Bombyx</taxon>
    </lineage>
</organism>
<keyword id="KW-0002">3D-structure</keyword>
<keyword id="KW-0049">Antioxidant</keyword>
<keyword id="KW-0186">Copper</keyword>
<keyword id="KW-0963">Cytoplasm</keyword>
<keyword id="KW-0903">Direct protein sequencing</keyword>
<keyword id="KW-1015">Disulfide bond</keyword>
<keyword id="KW-0479">Metal-binding</keyword>
<keyword id="KW-0560">Oxidoreductase</keyword>
<keyword id="KW-1185">Reference proteome</keyword>
<keyword id="KW-0862">Zinc</keyword>
<sequence length="154" mass="15842">MPAKAVCVLRGDVSGTVFFDQQDEKSPVVVSGEVQGLTKGKHGFHVHEFGDNTNGCTSAGAHFNPEKQDHGGPSSAVRHVGDLGNIEAIEDSGVTKVSIQDSQISLHGPNSIIGRTLVVHADPDDLGLGGHELSKTTGNAGGRIACGVIGLAKI</sequence>
<proteinExistence type="evidence at protein level"/>
<name>SODC_BOMMO</name>
<feature type="initiator methionine" description="Removed" evidence="2">
    <location>
        <position position="1"/>
    </location>
</feature>
<feature type="chain" id="PRO_0000164080" description="Superoxide dismutase [Cu-Zn]">
    <location>
        <begin position="2"/>
        <end position="154"/>
    </location>
</feature>
<feature type="binding site" evidence="3 8">
    <location>
        <position position="45"/>
    </location>
    <ligand>
        <name>Cu cation</name>
        <dbReference type="ChEBI" id="CHEBI:23378"/>
        <note>catalytic</note>
    </ligand>
</feature>
<feature type="binding site" evidence="3 8">
    <location>
        <position position="47"/>
    </location>
    <ligand>
        <name>Cu cation</name>
        <dbReference type="ChEBI" id="CHEBI:23378"/>
        <note>catalytic</note>
    </ligand>
</feature>
<feature type="binding site" evidence="3 8">
    <location>
        <position position="62"/>
    </location>
    <ligand>
        <name>Cu cation</name>
        <dbReference type="ChEBI" id="CHEBI:23378"/>
        <note>catalytic</note>
    </ligand>
</feature>
<feature type="binding site" evidence="3 7 8">
    <location>
        <position position="62"/>
    </location>
    <ligand>
        <name>Zn(2+)</name>
        <dbReference type="ChEBI" id="CHEBI:29105"/>
        <note>structural</note>
    </ligand>
</feature>
<feature type="binding site" evidence="3 7 8">
    <location>
        <position position="70"/>
    </location>
    <ligand>
        <name>Zn(2+)</name>
        <dbReference type="ChEBI" id="CHEBI:29105"/>
        <note>structural</note>
    </ligand>
</feature>
<feature type="binding site" evidence="3 7 8">
    <location>
        <position position="79"/>
    </location>
    <ligand>
        <name>Zn(2+)</name>
        <dbReference type="ChEBI" id="CHEBI:29105"/>
        <note>structural</note>
    </ligand>
</feature>
<feature type="binding site" evidence="3 7 8">
    <location>
        <position position="82"/>
    </location>
    <ligand>
        <name>Zn(2+)</name>
        <dbReference type="ChEBI" id="CHEBI:29105"/>
        <note>structural</note>
    </ligand>
</feature>
<feature type="binding site" evidence="3 8">
    <location>
        <position position="120"/>
    </location>
    <ligand>
        <name>Cu cation</name>
        <dbReference type="ChEBI" id="CHEBI:23378"/>
        <note>catalytic</note>
    </ligand>
</feature>
<feature type="disulfide bond" evidence="3 7 8">
    <location>
        <begin position="56"/>
        <end position="146"/>
    </location>
</feature>
<feature type="strand" evidence="9">
    <location>
        <begin position="3"/>
        <end position="23"/>
    </location>
</feature>
<feature type="strand" evidence="9">
    <location>
        <begin position="28"/>
        <end position="36"/>
    </location>
</feature>
<feature type="strand" evidence="9">
    <location>
        <begin position="39"/>
        <end position="48"/>
    </location>
</feature>
<feature type="helix" evidence="9">
    <location>
        <begin position="55"/>
        <end position="59"/>
    </location>
</feature>
<feature type="strand" evidence="9">
    <location>
        <begin position="82"/>
        <end position="90"/>
    </location>
</feature>
<feature type="strand" evidence="9">
    <location>
        <begin position="93"/>
        <end position="103"/>
    </location>
</feature>
<feature type="strand" evidence="9">
    <location>
        <begin position="105"/>
        <end position="108"/>
    </location>
</feature>
<feature type="strand" evidence="9">
    <location>
        <begin position="115"/>
        <end position="122"/>
    </location>
</feature>
<feature type="strand" evidence="9">
    <location>
        <begin position="129"/>
        <end position="131"/>
    </location>
</feature>
<feature type="turn" evidence="9">
    <location>
        <begin position="132"/>
        <end position="136"/>
    </location>
</feature>
<feature type="strand" evidence="9">
    <location>
        <begin position="143"/>
        <end position="148"/>
    </location>
</feature>
<comment type="function">
    <text evidence="1">Destroys radicals which are normally produced within the cells and which are toxic to biological systems.</text>
</comment>
<comment type="catalytic activity">
    <reaction evidence="1">
        <text>2 superoxide + 2 H(+) = H2O2 + O2</text>
        <dbReference type="Rhea" id="RHEA:20696"/>
        <dbReference type="ChEBI" id="CHEBI:15378"/>
        <dbReference type="ChEBI" id="CHEBI:15379"/>
        <dbReference type="ChEBI" id="CHEBI:16240"/>
        <dbReference type="ChEBI" id="CHEBI:18421"/>
        <dbReference type="EC" id="1.15.1.1"/>
    </reaction>
</comment>
<comment type="cofactor">
    <cofactor evidence="5">
        <name>Cu cation</name>
        <dbReference type="ChEBI" id="CHEBI:23378"/>
    </cofactor>
    <text evidence="3">Binds 1 copper ion per subunit.</text>
</comment>
<comment type="cofactor">
    <cofactor evidence="5">
        <name>Zn(2+)</name>
        <dbReference type="ChEBI" id="CHEBI:29105"/>
    </cofactor>
    <text evidence="3">Binds 1 zinc ion per subunit.</text>
</comment>
<comment type="subunit">
    <text evidence="3">Homodimer.</text>
</comment>
<comment type="subcellular location">
    <subcellularLocation>
        <location evidence="1">Cytoplasm</location>
    </subcellularLocation>
</comment>
<comment type="similarity">
    <text evidence="4">Belongs to the Cu-Zn superoxide dismutase family.</text>
</comment>
<protein>
    <recommendedName>
        <fullName>Superoxide dismutase [Cu-Zn]</fullName>
        <ecNumber>1.15.1.1</ecNumber>
    </recommendedName>
</protein>
<reference evidence="6" key="1">
    <citation type="submission" date="2003-11" db="EMBL/GenBank/DDBJ databases">
        <title>Cu/Zn superoxide dismutase in Bombyx mori.</title>
        <authorList>
            <person name="Hong S.M."/>
            <person name="Kang S.W."/>
            <person name="Kim N.S."/>
            <person name="Lee J.S."/>
            <person name="Nho S.K."/>
        </authorList>
    </citation>
    <scope>NUCLEOTIDE SEQUENCE [MRNA]</scope>
    <source>
        <strain evidence="6">Kl20</strain>
    </source>
</reference>
<reference evidence="4" key="2">
    <citation type="journal article" date="2001" name="Yi Chuan Xue Bao">
        <title>Protein database for several tissues derived from five instar of silkworm.</title>
        <authorList>
            <person name="Zhong B.-X."/>
        </authorList>
    </citation>
    <scope>PROTEIN SEQUENCE OF 2-31</scope>
    <source>
        <strain evidence="2">Xinhang X Keming</strain>
        <tissue evidence="2">Body wall</tissue>
        <tissue evidence="2">Fat body</tissue>
    </source>
</reference>
<reference evidence="7 8" key="3">
    <citation type="journal article" date="2010" name="Proteins">
        <title>Crystal structures of holo and Cu-deficient Cu/Zn-SOD from the silkworm Bombyx mori and the implications in amyotrophic lateral sclerosis.</title>
        <authorList>
            <person name="Zhang N.N."/>
            <person name="He Y.X."/>
            <person name="Li W.F."/>
            <person name="Teng Y.B."/>
            <person name="Yu J."/>
            <person name="Chen Y."/>
            <person name="Zhou C.Z."/>
        </authorList>
    </citation>
    <scope>X-RAY CRYSTALLOGRAPHY (1.80 ANGSTROMS) IN COMPLEX WITH COPPER AND ZINC IONS</scope>
    <scope>SUBUNIT</scope>
    <scope>DISULFIDE BOND</scope>
</reference>
<evidence type="ECO:0000250" key="1">
    <source>
        <dbReference type="UniProtKB" id="P00441"/>
    </source>
</evidence>
<evidence type="ECO:0000269" key="2">
    <source>
    </source>
</evidence>
<evidence type="ECO:0000269" key="3">
    <source>
    </source>
</evidence>
<evidence type="ECO:0000305" key="4"/>
<evidence type="ECO:0000305" key="5">
    <source>
    </source>
</evidence>
<evidence type="ECO:0000312" key="6">
    <source>
        <dbReference type="EMBL" id="AAR97568.1"/>
    </source>
</evidence>
<evidence type="ECO:0007744" key="7">
    <source>
        <dbReference type="PDB" id="3L9E"/>
    </source>
</evidence>
<evidence type="ECO:0007744" key="8">
    <source>
        <dbReference type="PDB" id="3L9Y"/>
    </source>
</evidence>
<evidence type="ECO:0007829" key="9">
    <source>
        <dbReference type="PDB" id="3L9Y"/>
    </source>
</evidence>
<accession>P82205</accession>
<accession>Q6SA03</accession>